<proteinExistence type="inferred from homology"/>
<comment type="catalytic activity">
    <reaction evidence="1">
        <text>D-erythro-1-(imidazol-4-yl)glycerol 3-phosphate = 3-(imidazol-4-yl)-2-oxopropyl phosphate + H2O</text>
        <dbReference type="Rhea" id="RHEA:11040"/>
        <dbReference type="ChEBI" id="CHEBI:15377"/>
        <dbReference type="ChEBI" id="CHEBI:57766"/>
        <dbReference type="ChEBI" id="CHEBI:58278"/>
        <dbReference type="EC" id="4.2.1.19"/>
    </reaction>
</comment>
<comment type="pathway">
    <text evidence="1">Amino-acid biosynthesis; L-histidine biosynthesis; L-histidine from 5-phospho-alpha-D-ribose 1-diphosphate: step 6/9.</text>
</comment>
<comment type="subcellular location">
    <subcellularLocation>
        <location evidence="1">Cytoplasm</location>
    </subcellularLocation>
</comment>
<comment type="similarity">
    <text evidence="1">Belongs to the imidazoleglycerol-phosphate dehydratase family.</text>
</comment>
<feature type="chain" id="PRO_0000336288" description="Imidazoleglycerol-phosphate dehydratase">
    <location>
        <begin position="1"/>
        <end position="206"/>
    </location>
</feature>
<feature type="region of interest" description="Disordered" evidence="2">
    <location>
        <begin position="1"/>
        <end position="24"/>
    </location>
</feature>
<sequence>MDPTASGRQAPRNPRQATVQRETKETSVSVALVVDGTGTVDIDTGVPFYDHMLAQLGKHAGFDLTVVTRGDLDVDAHHTVEDTALALGQAFREALGDKAGIRRFGDALVPLDEALCQVAVDLSGRPYLVHSEPEMVELIGTYETTLTRHVWESFVAQAHICLHIQVLAGRNAHHINEVQFKAVARALRDAVRLDGVAGVPSTKGAL</sequence>
<gene>
    <name evidence="1" type="primary">hisB</name>
    <name type="ordered locus">Acel_1060</name>
</gene>
<keyword id="KW-0028">Amino-acid biosynthesis</keyword>
<keyword id="KW-0963">Cytoplasm</keyword>
<keyword id="KW-0368">Histidine biosynthesis</keyword>
<keyword id="KW-0456">Lyase</keyword>
<keyword id="KW-1185">Reference proteome</keyword>
<protein>
    <recommendedName>
        <fullName evidence="1">Imidazoleglycerol-phosphate dehydratase</fullName>
        <shortName evidence="1">IGPD</shortName>
        <ecNumber evidence="1">4.2.1.19</ecNumber>
    </recommendedName>
</protein>
<dbReference type="EC" id="4.2.1.19" evidence="1"/>
<dbReference type="EMBL" id="CP000481">
    <property type="protein sequence ID" value="ABK52833.1"/>
    <property type="molecule type" value="Genomic_DNA"/>
</dbReference>
<dbReference type="RefSeq" id="WP_011719896.1">
    <property type="nucleotide sequence ID" value="NC_008578.1"/>
</dbReference>
<dbReference type="SMR" id="A0LTS3"/>
<dbReference type="FunCoup" id="A0LTS3">
    <property type="interactions" value="176"/>
</dbReference>
<dbReference type="STRING" id="351607.Acel_1060"/>
<dbReference type="KEGG" id="ace:Acel_1060"/>
<dbReference type="eggNOG" id="COG0131">
    <property type="taxonomic scope" value="Bacteria"/>
</dbReference>
<dbReference type="HOGENOM" id="CLU_044308_3_0_11"/>
<dbReference type="InParanoid" id="A0LTS3"/>
<dbReference type="OrthoDB" id="9790411at2"/>
<dbReference type="UniPathway" id="UPA00031">
    <property type="reaction ID" value="UER00011"/>
</dbReference>
<dbReference type="Proteomes" id="UP000008221">
    <property type="component" value="Chromosome"/>
</dbReference>
<dbReference type="GO" id="GO:0005737">
    <property type="term" value="C:cytoplasm"/>
    <property type="evidence" value="ECO:0007669"/>
    <property type="project" value="UniProtKB-SubCell"/>
</dbReference>
<dbReference type="GO" id="GO:0004424">
    <property type="term" value="F:imidazoleglycerol-phosphate dehydratase activity"/>
    <property type="evidence" value="ECO:0007669"/>
    <property type="project" value="UniProtKB-UniRule"/>
</dbReference>
<dbReference type="GO" id="GO:0000105">
    <property type="term" value="P:L-histidine biosynthetic process"/>
    <property type="evidence" value="ECO:0007669"/>
    <property type="project" value="UniProtKB-UniRule"/>
</dbReference>
<dbReference type="CDD" id="cd07914">
    <property type="entry name" value="IGPD"/>
    <property type="match status" value="1"/>
</dbReference>
<dbReference type="FunFam" id="3.30.230.40:FF:000001">
    <property type="entry name" value="Imidazoleglycerol-phosphate dehydratase HisB"/>
    <property type="match status" value="1"/>
</dbReference>
<dbReference type="FunFam" id="3.30.230.40:FF:000003">
    <property type="entry name" value="Imidazoleglycerol-phosphate dehydratase HisB"/>
    <property type="match status" value="1"/>
</dbReference>
<dbReference type="Gene3D" id="3.30.230.40">
    <property type="entry name" value="Imidazole glycerol phosphate dehydratase, domain 1"/>
    <property type="match status" value="2"/>
</dbReference>
<dbReference type="HAMAP" id="MF_00076">
    <property type="entry name" value="HisB"/>
    <property type="match status" value="1"/>
</dbReference>
<dbReference type="InterPro" id="IPR038494">
    <property type="entry name" value="IGPD_sf"/>
</dbReference>
<dbReference type="InterPro" id="IPR000807">
    <property type="entry name" value="ImidazoleglycerolP_deHydtase"/>
</dbReference>
<dbReference type="InterPro" id="IPR020565">
    <property type="entry name" value="ImidazoleglycerP_deHydtase_CS"/>
</dbReference>
<dbReference type="InterPro" id="IPR020568">
    <property type="entry name" value="Ribosomal_Su5_D2-typ_SF"/>
</dbReference>
<dbReference type="NCBIfam" id="NF002110">
    <property type="entry name" value="PRK00951.1-6"/>
    <property type="match status" value="1"/>
</dbReference>
<dbReference type="NCBIfam" id="NF002111">
    <property type="entry name" value="PRK00951.2-1"/>
    <property type="match status" value="1"/>
</dbReference>
<dbReference type="NCBIfam" id="NF002114">
    <property type="entry name" value="PRK00951.2-4"/>
    <property type="match status" value="1"/>
</dbReference>
<dbReference type="PANTHER" id="PTHR23133:SF2">
    <property type="entry name" value="IMIDAZOLEGLYCEROL-PHOSPHATE DEHYDRATASE"/>
    <property type="match status" value="1"/>
</dbReference>
<dbReference type="PANTHER" id="PTHR23133">
    <property type="entry name" value="IMIDAZOLEGLYCEROL-PHOSPHATE DEHYDRATASE HIS7"/>
    <property type="match status" value="1"/>
</dbReference>
<dbReference type="Pfam" id="PF00475">
    <property type="entry name" value="IGPD"/>
    <property type="match status" value="1"/>
</dbReference>
<dbReference type="SUPFAM" id="SSF54211">
    <property type="entry name" value="Ribosomal protein S5 domain 2-like"/>
    <property type="match status" value="2"/>
</dbReference>
<dbReference type="PROSITE" id="PS00954">
    <property type="entry name" value="IGP_DEHYDRATASE_1"/>
    <property type="match status" value="1"/>
</dbReference>
<name>HIS7_ACIC1</name>
<organism>
    <name type="scientific">Acidothermus cellulolyticus (strain ATCC 43068 / DSM 8971 / 11B)</name>
    <dbReference type="NCBI Taxonomy" id="351607"/>
    <lineage>
        <taxon>Bacteria</taxon>
        <taxon>Bacillati</taxon>
        <taxon>Actinomycetota</taxon>
        <taxon>Actinomycetes</taxon>
        <taxon>Acidothermales</taxon>
        <taxon>Acidothermaceae</taxon>
        <taxon>Acidothermus</taxon>
    </lineage>
</organism>
<reference key="1">
    <citation type="journal article" date="2009" name="Genome Res.">
        <title>Complete genome of the cellulolytic thermophile Acidothermus cellulolyticus 11B provides insights into its ecophysiological and evolutionary adaptations.</title>
        <authorList>
            <person name="Barabote R.D."/>
            <person name="Xie G."/>
            <person name="Leu D.H."/>
            <person name="Normand P."/>
            <person name="Necsulea A."/>
            <person name="Daubin V."/>
            <person name="Medigue C."/>
            <person name="Adney W.S."/>
            <person name="Xu X.C."/>
            <person name="Lapidus A."/>
            <person name="Parales R.E."/>
            <person name="Detter C."/>
            <person name="Pujic P."/>
            <person name="Bruce D."/>
            <person name="Lavire C."/>
            <person name="Challacombe J.F."/>
            <person name="Brettin T.S."/>
            <person name="Berry A.M."/>
        </authorList>
    </citation>
    <scope>NUCLEOTIDE SEQUENCE [LARGE SCALE GENOMIC DNA]</scope>
    <source>
        <strain>ATCC 43068 / DSM 8971 / 11B</strain>
    </source>
</reference>
<evidence type="ECO:0000255" key="1">
    <source>
        <dbReference type="HAMAP-Rule" id="MF_00076"/>
    </source>
</evidence>
<evidence type="ECO:0000256" key="2">
    <source>
        <dbReference type="SAM" id="MobiDB-lite"/>
    </source>
</evidence>
<accession>A0LTS3</accession>